<keyword id="KW-0025">Alternative splicing</keyword>
<keyword id="KW-1185">Reference proteome</keyword>
<protein>
    <recommendedName>
        <fullName>Follicle cell protein 3C-1</fullName>
    </recommendedName>
</protein>
<accession>P11450</accession>
<accession>O97173</accession>
<accession>Q32UU7</accession>
<accession>Q32UV1</accession>
<accession>Q32UV5</accession>
<accession>Q32UV9</accession>
<accession>Q32UW7</accession>
<accession>Q32UX5</accession>
<accession>Q32UX9</accession>
<accession>Q32UY3</accession>
<accession>Q32UY7</accession>
<accession>Q32UZ9</accession>
<accession>Q32V15</accession>
<accession>Q32V31</accession>
<accession>Q32V35</accession>
<accession>Q32V47</accession>
<accession>Q32V51</accession>
<evidence type="ECO:0000256" key="1">
    <source>
        <dbReference type="SAM" id="MobiDB-lite"/>
    </source>
</evidence>
<evidence type="ECO:0000269" key="2">
    <source>
    </source>
</evidence>
<evidence type="ECO:0000269" key="3">
    <source>
    </source>
</evidence>
<evidence type="ECO:0000303" key="4">
    <source ref="6"/>
</evidence>
<evidence type="ECO:0000305" key="5"/>
<comment type="alternative products">
    <event type="alternative splicing"/>
    <isoform>
        <id>P11450-1</id>
        <name>A</name>
        <sequence type="displayed"/>
    </isoform>
    <isoform>
        <id>P11450-2</id>
        <name>B</name>
        <sequence type="described" ref="VSP_037382"/>
    </isoform>
</comment>
<comment type="tissue specificity">
    <text evidence="3">Expressed in follicle cells during vitelline membrane formation.</text>
</comment>
<feature type="chain" id="PRO_0000087209" description="Follicle cell protein 3C-1">
    <location>
        <begin position="1"/>
        <end position="282"/>
    </location>
</feature>
<feature type="region of interest" description="Disordered" evidence="1">
    <location>
        <begin position="103"/>
        <end position="156"/>
    </location>
</feature>
<feature type="compositionally biased region" description="Low complexity" evidence="1">
    <location>
        <begin position="106"/>
        <end position="118"/>
    </location>
</feature>
<feature type="compositionally biased region" description="Polar residues" evidence="1">
    <location>
        <begin position="128"/>
        <end position="140"/>
    </location>
</feature>
<feature type="compositionally biased region" description="Low complexity" evidence="1">
    <location>
        <begin position="141"/>
        <end position="156"/>
    </location>
</feature>
<feature type="splice variant" id="VSP_037382" description="In isoform B." evidence="4">
    <location>
        <begin position="1"/>
        <end position="69"/>
    </location>
</feature>
<feature type="sequence variant" description="In strain: Usa13." evidence="2">
    <original>S</original>
    <variation>I</variation>
    <location>
        <position position="71"/>
    </location>
</feature>
<feature type="sequence variant" description="In strain: Usa3, Usa16, Zim7, Zim10, Zim13, Zim16, Zim18, Zim22, Zim39, Zim41, Zim42, Z36 and Z50." evidence="2">
    <original>G</original>
    <variation>A</variation>
    <location>
        <position position="74"/>
    </location>
</feature>
<feature type="sequence variant" description="In strain: Usa3, Zim7, Zim10, Zim13, Zim16, Zim18, Zim22, Zim39, Zim41, Zim42, Z36 and Z50." evidence="2">
    <original>V</original>
    <variation>A</variation>
    <location>
        <position position="75"/>
    </location>
</feature>
<feature type="sequence variant" description="In strain: Usa3, Usa16, Zim7, Zim10, Zim13, Zim16, Zim18, Zim22, Zim39, Zim41, Zim42, Z36 and Z50." evidence="2">
    <original>S</original>
    <variation>T</variation>
    <location>
        <position position="77"/>
    </location>
</feature>
<feature type="sequence variant" description="In strain: Zim39." evidence="2">
    <original>A</original>
    <variation>T</variation>
    <location>
        <position position="82"/>
    </location>
</feature>
<feature type="sequence variant" description="In strain: Zim10, Zim13, Zim16, Zim18, Zim39, Z36 and Z50." evidence="2">
    <original>T</original>
    <variation>S</variation>
    <location>
        <position position="108"/>
    </location>
</feature>
<feature type="sequence variant" description="In strain: Zim10, Zim13, Zim16, Zim18, Zim39, Z36 and Z50." evidence="2">
    <original>I</original>
    <variation>V</variation>
    <location>
        <position position="109"/>
    </location>
</feature>
<feature type="sequence variant" description="In strain: Zim41." evidence="2">
    <original>I</original>
    <variation>T</variation>
    <location>
        <position position="125"/>
    </location>
</feature>
<feature type="sequence variant" description="In strain: Zim15 and Z50." evidence="2">
    <original>M</original>
    <variation>I</variation>
    <location>
        <position position="135"/>
    </location>
</feature>
<feature type="sequence variant" description="In strain: Zim41." evidence="2">
    <original>A</original>
    <variation>V</variation>
    <location>
        <position position="140"/>
    </location>
</feature>
<feature type="sequence variant" description="In strain: Usa1, Zim15, Zim18, Zim22, Zim39 and Zim42." evidence="2">
    <original>L</original>
    <variation>P</variation>
    <location>
        <position position="143"/>
    </location>
</feature>
<feature type="sequence variant" description="In strain: Zim13." evidence="2">
    <original>S</original>
    <variation>G</variation>
    <location>
        <position position="152"/>
    </location>
</feature>
<feature type="sequence variant" description="In strain: Z50." evidence="2">
    <original>T</original>
    <variation>K</variation>
    <location>
        <position position="163"/>
    </location>
</feature>
<feature type="sequence variant" description="In strain: Usa8, Usa12, Usa16, Zim7, Zim10, Zim13, Zim15, Zim16, Zim18, Zim22, Zim39, Zim42, Z36 and Z50." evidence="2">
    <original>A</original>
    <variation>T</variation>
    <location>
        <position position="164"/>
    </location>
</feature>
<feature type="sequence variant" description="In strain: Usa8 and Usa12." evidence="2 3">
    <original>P</original>
    <variation>H</variation>
    <location>
        <position position="167"/>
    </location>
</feature>
<feature type="sequence variant" description="In strain: Usa8, Usa12, Usa16, Zim18, Zim39 and Zim41." evidence="2 3">
    <original>V</original>
    <variation>A</variation>
    <location>
        <position position="168"/>
    </location>
</feature>
<feature type="sequence conflict" description="In Ref. 1; AAA29016." evidence="5" ref="1">
    <original>SGVPYRCPLMG</original>
    <variation>LGFPTVAH</variation>
    <location>
        <begin position="272"/>
        <end position="282"/>
    </location>
</feature>
<organism>
    <name type="scientific">Drosophila melanogaster</name>
    <name type="common">Fruit fly</name>
    <dbReference type="NCBI Taxonomy" id="7227"/>
    <lineage>
        <taxon>Eukaryota</taxon>
        <taxon>Metazoa</taxon>
        <taxon>Ecdysozoa</taxon>
        <taxon>Arthropoda</taxon>
        <taxon>Hexapoda</taxon>
        <taxon>Insecta</taxon>
        <taxon>Pterygota</taxon>
        <taxon>Neoptera</taxon>
        <taxon>Endopterygota</taxon>
        <taxon>Diptera</taxon>
        <taxon>Brachycera</taxon>
        <taxon>Muscomorpha</taxon>
        <taxon>Ephydroidea</taxon>
        <taxon>Drosophilidae</taxon>
        <taxon>Drosophila</taxon>
        <taxon>Sophophora</taxon>
    </lineage>
</organism>
<name>FCP3C_DROME</name>
<gene>
    <name type="primary">Fcp3C</name>
    <name type="ORF">CG4015</name>
</gene>
<sequence length="282" mass="30300">MDGAKAEVFSVSVDTKMGAFKNSLLLLTLLLAIHLEASKIVYKKPLYGNSNIIKDKRIKTKPVKLETSTMSSTGVASSSTTAEEDWPTAVEFVIMTTPASELEASTETIGNNGTTETTVGEAPIIGSSEGSTRSMEPTTASPLMSTNPSSSSSLVSTIPLPPTAGLPVQDNQPVPCTCGVFLSSQIPNGLPTKPLIHQELDHMFPCNAIGRKQCQTKCLETIVQHLPNSANIVCSALGHDCHKERAYLFIKNCHNQWVNTNLQAGREYCCRSGVPYRCPLMG</sequence>
<proteinExistence type="evidence at transcript level"/>
<reference key="1">
    <citation type="journal article" date="1987" name="Dev. Biol.">
        <title>Characterization and sequence of follicle cell genes selectively expressed during vitelline membrane formation in Drosophila.</title>
        <authorList>
            <person name="Burke T."/>
            <person name="Waring G.L."/>
            <person name="Popodi E."/>
            <person name="Minoo P."/>
        </authorList>
    </citation>
    <scope>NUCLEOTIDE SEQUENCE [GENOMIC DNA]</scope>
    <scope>TISSUE SPECIFICITY</scope>
    <scope>VARIANTS HIS-167 AND ALA-168</scope>
    <source>
        <tissue>Ovary</tissue>
    </source>
</reference>
<reference key="2">
    <citation type="journal article" date="2005" name="Genetics">
        <title>Multiple signatures of positive selection downstream of notch on the X chromosome in Drosophila melanogaster.</title>
        <authorList>
            <person name="DuMont V.B."/>
            <person name="Aquadro C.F."/>
        </authorList>
    </citation>
    <scope>NUCLEOTIDE SEQUENCE [GENOMIC DNA]</scope>
    <scope>VARIANTS ILE-71; ALA-74; ALA-75; THR-77; THR-82; SER-108; VAL-109; THR-125; ILE-135; VAL-140; PRO-143; GLY-152; LYS-163; THR-164; HIS-167 AND ALA-168</scope>
    <source>
        <strain>Usa1</strain>
        <strain>Usa11</strain>
        <strain>Usa12</strain>
        <strain>Usa13</strain>
        <strain>Usa15</strain>
        <strain>Usa16</strain>
        <strain>Usa17</strain>
        <strain>Usa18</strain>
        <strain>Usa2</strain>
        <strain>Usa3</strain>
        <strain>Usa4</strain>
        <strain>Usa6</strain>
        <strain>Usa7</strain>
        <strain>Usa8</strain>
        <strain>Usa9</strain>
        <strain>Z36</strain>
        <strain>Z50</strain>
        <strain>Zim10</strain>
        <strain>Zim13</strain>
        <strain>Zim15</strain>
        <strain>Zim16</strain>
        <strain>Zim18</strain>
        <strain>Zim22</strain>
        <strain>Zim39</strain>
        <strain>Zim41</strain>
        <strain>Zim42</strain>
        <strain>Zim7</strain>
    </source>
</reference>
<reference key="3">
    <citation type="journal article" date="2000" name="Science">
        <title>The genome sequence of Drosophila melanogaster.</title>
        <authorList>
            <person name="Adams M.D."/>
            <person name="Celniker S.E."/>
            <person name="Holt R.A."/>
            <person name="Evans C.A."/>
            <person name="Gocayne J.D."/>
            <person name="Amanatides P.G."/>
            <person name="Scherer S.E."/>
            <person name="Li P.W."/>
            <person name="Hoskins R.A."/>
            <person name="Galle R.F."/>
            <person name="George R.A."/>
            <person name="Lewis S.E."/>
            <person name="Richards S."/>
            <person name="Ashburner M."/>
            <person name="Henderson S.N."/>
            <person name="Sutton G.G."/>
            <person name="Wortman J.R."/>
            <person name="Yandell M.D."/>
            <person name="Zhang Q."/>
            <person name="Chen L.X."/>
            <person name="Brandon R.C."/>
            <person name="Rogers Y.-H.C."/>
            <person name="Blazej R.G."/>
            <person name="Champe M."/>
            <person name="Pfeiffer B.D."/>
            <person name="Wan K.H."/>
            <person name="Doyle C."/>
            <person name="Baxter E.G."/>
            <person name="Helt G."/>
            <person name="Nelson C.R."/>
            <person name="Miklos G.L.G."/>
            <person name="Abril J.F."/>
            <person name="Agbayani A."/>
            <person name="An H.-J."/>
            <person name="Andrews-Pfannkoch C."/>
            <person name="Baldwin D."/>
            <person name="Ballew R.M."/>
            <person name="Basu A."/>
            <person name="Baxendale J."/>
            <person name="Bayraktaroglu L."/>
            <person name="Beasley E.M."/>
            <person name="Beeson K.Y."/>
            <person name="Benos P.V."/>
            <person name="Berman B.P."/>
            <person name="Bhandari D."/>
            <person name="Bolshakov S."/>
            <person name="Borkova D."/>
            <person name="Botchan M.R."/>
            <person name="Bouck J."/>
            <person name="Brokstein P."/>
            <person name="Brottier P."/>
            <person name="Burtis K.C."/>
            <person name="Busam D.A."/>
            <person name="Butler H."/>
            <person name="Cadieu E."/>
            <person name="Center A."/>
            <person name="Chandra I."/>
            <person name="Cherry J.M."/>
            <person name="Cawley S."/>
            <person name="Dahlke C."/>
            <person name="Davenport L.B."/>
            <person name="Davies P."/>
            <person name="de Pablos B."/>
            <person name="Delcher A."/>
            <person name="Deng Z."/>
            <person name="Mays A.D."/>
            <person name="Dew I."/>
            <person name="Dietz S.M."/>
            <person name="Dodson K."/>
            <person name="Doup L.E."/>
            <person name="Downes M."/>
            <person name="Dugan-Rocha S."/>
            <person name="Dunkov B.C."/>
            <person name="Dunn P."/>
            <person name="Durbin K.J."/>
            <person name="Evangelista C.C."/>
            <person name="Ferraz C."/>
            <person name="Ferriera S."/>
            <person name="Fleischmann W."/>
            <person name="Fosler C."/>
            <person name="Gabrielian A.E."/>
            <person name="Garg N.S."/>
            <person name="Gelbart W.M."/>
            <person name="Glasser K."/>
            <person name="Glodek A."/>
            <person name="Gong F."/>
            <person name="Gorrell J.H."/>
            <person name="Gu Z."/>
            <person name="Guan P."/>
            <person name="Harris M."/>
            <person name="Harris N.L."/>
            <person name="Harvey D.A."/>
            <person name="Heiman T.J."/>
            <person name="Hernandez J.R."/>
            <person name="Houck J."/>
            <person name="Hostin D."/>
            <person name="Houston K.A."/>
            <person name="Howland T.J."/>
            <person name="Wei M.-H."/>
            <person name="Ibegwam C."/>
            <person name="Jalali M."/>
            <person name="Kalush F."/>
            <person name="Karpen G.H."/>
            <person name="Ke Z."/>
            <person name="Kennison J.A."/>
            <person name="Ketchum K.A."/>
            <person name="Kimmel B.E."/>
            <person name="Kodira C.D."/>
            <person name="Kraft C.L."/>
            <person name="Kravitz S."/>
            <person name="Kulp D."/>
            <person name="Lai Z."/>
            <person name="Lasko P."/>
            <person name="Lei Y."/>
            <person name="Levitsky A.A."/>
            <person name="Li J.H."/>
            <person name="Li Z."/>
            <person name="Liang Y."/>
            <person name="Lin X."/>
            <person name="Liu X."/>
            <person name="Mattei B."/>
            <person name="McIntosh T.C."/>
            <person name="McLeod M.P."/>
            <person name="McPherson D."/>
            <person name="Merkulov G."/>
            <person name="Milshina N.V."/>
            <person name="Mobarry C."/>
            <person name="Morris J."/>
            <person name="Moshrefi A."/>
            <person name="Mount S.M."/>
            <person name="Moy M."/>
            <person name="Murphy B."/>
            <person name="Murphy L."/>
            <person name="Muzny D.M."/>
            <person name="Nelson D.L."/>
            <person name="Nelson D.R."/>
            <person name="Nelson K.A."/>
            <person name="Nixon K."/>
            <person name="Nusskern D.R."/>
            <person name="Pacleb J.M."/>
            <person name="Palazzolo M."/>
            <person name="Pittman G.S."/>
            <person name="Pan S."/>
            <person name="Pollard J."/>
            <person name="Puri V."/>
            <person name="Reese M.G."/>
            <person name="Reinert K."/>
            <person name="Remington K."/>
            <person name="Saunders R.D.C."/>
            <person name="Scheeler F."/>
            <person name="Shen H."/>
            <person name="Shue B.C."/>
            <person name="Siden-Kiamos I."/>
            <person name="Simpson M."/>
            <person name="Skupski M.P."/>
            <person name="Smith T.J."/>
            <person name="Spier E."/>
            <person name="Spradling A.C."/>
            <person name="Stapleton M."/>
            <person name="Strong R."/>
            <person name="Sun E."/>
            <person name="Svirskas R."/>
            <person name="Tector C."/>
            <person name="Turner R."/>
            <person name="Venter E."/>
            <person name="Wang A.H."/>
            <person name="Wang X."/>
            <person name="Wang Z.-Y."/>
            <person name="Wassarman D.A."/>
            <person name="Weinstock G.M."/>
            <person name="Weissenbach J."/>
            <person name="Williams S.M."/>
            <person name="Woodage T."/>
            <person name="Worley K.C."/>
            <person name="Wu D."/>
            <person name="Yang S."/>
            <person name="Yao Q.A."/>
            <person name="Ye J."/>
            <person name="Yeh R.-F."/>
            <person name="Zaveri J.S."/>
            <person name="Zhan M."/>
            <person name="Zhang G."/>
            <person name="Zhao Q."/>
            <person name="Zheng L."/>
            <person name="Zheng X.H."/>
            <person name="Zhong F.N."/>
            <person name="Zhong W."/>
            <person name="Zhou X."/>
            <person name="Zhu S.C."/>
            <person name="Zhu X."/>
            <person name="Smith H.O."/>
            <person name="Gibbs R.A."/>
            <person name="Myers E.W."/>
            <person name="Rubin G.M."/>
            <person name="Venter J.C."/>
        </authorList>
    </citation>
    <scope>NUCLEOTIDE SEQUENCE [LARGE SCALE GENOMIC DNA]</scope>
    <source>
        <strain>Berkeley</strain>
    </source>
</reference>
<reference key="4">
    <citation type="journal article" date="2002" name="Genome Biol.">
        <title>Annotation of the Drosophila melanogaster euchromatic genome: a systematic review.</title>
        <authorList>
            <person name="Misra S."/>
            <person name="Crosby M.A."/>
            <person name="Mungall C.J."/>
            <person name="Matthews B.B."/>
            <person name="Campbell K.S."/>
            <person name="Hradecky P."/>
            <person name="Huang Y."/>
            <person name="Kaminker J.S."/>
            <person name="Millburn G.H."/>
            <person name="Prochnik S.E."/>
            <person name="Smith C.D."/>
            <person name="Tupy J.L."/>
            <person name="Whitfield E.J."/>
            <person name="Bayraktaroglu L."/>
            <person name="Berman B.P."/>
            <person name="Bettencourt B.R."/>
            <person name="Celniker S.E."/>
            <person name="de Grey A.D.N.J."/>
            <person name="Drysdale R.A."/>
            <person name="Harris N.L."/>
            <person name="Richter J."/>
            <person name="Russo S."/>
            <person name="Schroeder A.J."/>
            <person name="Shu S.Q."/>
            <person name="Stapleton M."/>
            <person name="Yamada C."/>
            <person name="Ashburner M."/>
            <person name="Gelbart W.M."/>
            <person name="Rubin G.M."/>
            <person name="Lewis S.E."/>
        </authorList>
    </citation>
    <scope>GENOME REANNOTATION</scope>
    <source>
        <strain>Berkeley</strain>
    </source>
</reference>
<reference key="5">
    <citation type="journal article" date="2000" name="Science">
        <title>From sequence to chromosome: the tip of the X chromosome of D. melanogaster.</title>
        <authorList>
            <person name="Benos P.V."/>
            <person name="Gatt M.K."/>
            <person name="Ashburner M."/>
            <person name="Murphy L."/>
            <person name="Harris D."/>
            <person name="Barrell B.G."/>
            <person name="Ferraz C."/>
            <person name="Vidal S."/>
            <person name="Brun C."/>
            <person name="Demailles J."/>
            <person name="Cadieu E."/>
            <person name="Dreano S."/>
            <person name="Gloux S."/>
            <person name="Lelaure V."/>
            <person name="Mottier S."/>
            <person name="Galibert F."/>
            <person name="Borkova D."/>
            <person name="Minana B."/>
            <person name="Kafatos F.C."/>
            <person name="Louis C."/>
            <person name="Siden-Kiamos I."/>
            <person name="Bolshakov S."/>
            <person name="Papagiannakis G."/>
            <person name="Spanos L."/>
            <person name="Cox S."/>
            <person name="Madueno E."/>
            <person name="de Pablos B."/>
            <person name="Modolell J."/>
            <person name="Peter A."/>
            <person name="Schoettler P."/>
            <person name="Werner M."/>
            <person name="Mourkioti F."/>
            <person name="Beinert N."/>
            <person name="Dowe G."/>
            <person name="Schaefer U."/>
            <person name="Jaeckle H."/>
            <person name="Bucheton A."/>
            <person name="Callister D.M."/>
            <person name="Campbell L.A."/>
            <person name="Darlamitsou A."/>
            <person name="Henderson N.S."/>
            <person name="McMillan P.J."/>
            <person name="Salles C."/>
            <person name="Tait E.A."/>
            <person name="Valenti P."/>
            <person name="Saunders R.D.C."/>
            <person name="Glover D.M."/>
        </authorList>
    </citation>
    <scope>NUCLEOTIDE SEQUENCE [LARGE SCALE GENOMIC DNA]</scope>
    <source>
        <strain>Oregon-R</strain>
    </source>
</reference>
<reference key="6">
    <citation type="submission" date="2006-06" db="EMBL/GenBank/DDBJ databases">
        <authorList>
            <person name="Stapleton M."/>
            <person name="Carlson J.W."/>
            <person name="Chavez C."/>
            <person name="Frise E."/>
            <person name="George R.A."/>
            <person name="Pacleb J.M."/>
            <person name="Park S."/>
            <person name="Wan K.H."/>
            <person name="Yu C."/>
            <person name="Celniker S.E."/>
        </authorList>
    </citation>
    <scope>NUCLEOTIDE SEQUENCE [LARGE SCALE MRNA] (ISOFORM B)</scope>
    <source>
        <strain>Berkeley</strain>
    </source>
</reference>
<dbReference type="EMBL" id="M18281">
    <property type="protein sequence ID" value="AAA29016.1"/>
    <property type="molecule type" value="Genomic_DNA"/>
</dbReference>
<dbReference type="EMBL" id="AY795911">
    <property type="protein sequence ID" value="AAY27431.1"/>
    <property type="molecule type" value="Genomic_DNA"/>
</dbReference>
<dbReference type="EMBL" id="AY795912">
    <property type="protein sequence ID" value="AAY27436.1"/>
    <property type="molecule type" value="Genomic_DNA"/>
</dbReference>
<dbReference type="EMBL" id="AY795914">
    <property type="protein sequence ID" value="AAY27444.1"/>
    <property type="molecule type" value="Genomic_DNA"/>
</dbReference>
<dbReference type="EMBL" id="AY795913">
    <property type="protein sequence ID" value="AAY27440.1"/>
    <property type="molecule type" value="Genomic_DNA"/>
</dbReference>
<dbReference type="EMBL" id="AY795915">
    <property type="protein sequence ID" value="AAY27448.1"/>
    <property type="molecule type" value="Genomic_DNA"/>
</dbReference>
<dbReference type="EMBL" id="AY795916">
    <property type="protein sequence ID" value="AAY27452.1"/>
    <property type="molecule type" value="Genomic_DNA"/>
</dbReference>
<dbReference type="EMBL" id="AY795917">
    <property type="protein sequence ID" value="AAY27456.1"/>
    <property type="molecule type" value="Genomic_DNA"/>
</dbReference>
<dbReference type="EMBL" id="AY795918">
    <property type="protein sequence ID" value="AAY27460.1"/>
    <property type="molecule type" value="Genomic_DNA"/>
</dbReference>
<dbReference type="EMBL" id="AY795919">
    <property type="protein sequence ID" value="AAY27464.1"/>
    <property type="molecule type" value="Genomic_DNA"/>
</dbReference>
<dbReference type="EMBL" id="AY795920">
    <property type="protein sequence ID" value="AAY27468.1"/>
    <property type="molecule type" value="Genomic_DNA"/>
</dbReference>
<dbReference type="EMBL" id="AY795921">
    <property type="protein sequence ID" value="AAY27472.1"/>
    <property type="molecule type" value="Genomic_DNA"/>
</dbReference>
<dbReference type="EMBL" id="AY795922">
    <property type="protein sequence ID" value="AAY27476.1"/>
    <property type="molecule type" value="Genomic_DNA"/>
</dbReference>
<dbReference type="EMBL" id="AY795923">
    <property type="protein sequence ID" value="AAY27480.1"/>
    <property type="molecule type" value="Genomic_DNA"/>
</dbReference>
<dbReference type="EMBL" id="AY795924">
    <property type="protein sequence ID" value="AAY27484.1"/>
    <property type="molecule type" value="Genomic_DNA"/>
</dbReference>
<dbReference type="EMBL" id="AY795925">
    <property type="protein sequence ID" value="AAY27488.1"/>
    <property type="molecule type" value="Genomic_DNA"/>
</dbReference>
<dbReference type="EMBL" id="AY795926">
    <property type="protein sequence ID" value="AAY27492.1"/>
    <property type="molecule type" value="Genomic_DNA"/>
</dbReference>
<dbReference type="EMBL" id="AY795927">
    <property type="protein sequence ID" value="AAY27496.1"/>
    <property type="molecule type" value="Genomic_DNA"/>
</dbReference>
<dbReference type="EMBL" id="AY795928">
    <property type="protein sequence ID" value="AAY27500.1"/>
    <property type="molecule type" value="Genomic_DNA"/>
</dbReference>
<dbReference type="EMBL" id="AY795929">
    <property type="protein sequence ID" value="AAY27504.1"/>
    <property type="molecule type" value="Genomic_DNA"/>
</dbReference>
<dbReference type="EMBL" id="AY795930">
    <property type="protein sequence ID" value="AAY27508.1"/>
    <property type="molecule type" value="Genomic_DNA"/>
</dbReference>
<dbReference type="EMBL" id="AY795931">
    <property type="protein sequence ID" value="AAY27512.1"/>
    <property type="molecule type" value="Genomic_DNA"/>
</dbReference>
<dbReference type="EMBL" id="AY795932">
    <property type="protein sequence ID" value="AAY27516.1"/>
    <property type="molecule type" value="Genomic_DNA"/>
</dbReference>
<dbReference type="EMBL" id="AY795933">
    <property type="protein sequence ID" value="AAY27520.1"/>
    <property type="molecule type" value="Genomic_DNA"/>
</dbReference>
<dbReference type="EMBL" id="AY795934">
    <property type="protein sequence ID" value="AAY27524.1"/>
    <property type="molecule type" value="Genomic_DNA"/>
</dbReference>
<dbReference type="EMBL" id="AY795935">
    <property type="protein sequence ID" value="AAY27528.1"/>
    <property type="molecule type" value="Genomic_DNA"/>
</dbReference>
<dbReference type="EMBL" id="AY795936">
    <property type="protein sequence ID" value="AAY27532.1"/>
    <property type="molecule type" value="Genomic_DNA"/>
</dbReference>
<dbReference type="EMBL" id="AY795937">
    <property type="protein sequence ID" value="AAY27536.1"/>
    <property type="molecule type" value="Genomic_DNA"/>
</dbReference>
<dbReference type="EMBL" id="AE014298">
    <property type="protein sequence ID" value="AAF45850.2"/>
    <property type="molecule type" value="Genomic_DNA"/>
</dbReference>
<dbReference type="EMBL" id="AL035395">
    <property type="protein sequence ID" value="CAB37613.1"/>
    <property type="molecule type" value="Genomic_DNA"/>
</dbReference>
<dbReference type="EMBL" id="BT025893">
    <property type="protein sequence ID" value="ABG02137.1"/>
    <property type="molecule type" value="mRNA"/>
</dbReference>
<dbReference type="PIR" id="B27249">
    <property type="entry name" value="B27249"/>
</dbReference>
<dbReference type="RefSeq" id="NP_477482.2">
    <molecule id="P11450-1"/>
    <property type="nucleotide sequence ID" value="NM_058134.5"/>
</dbReference>
<dbReference type="IntAct" id="P11450">
    <property type="interactions" value="5"/>
</dbReference>
<dbReference type="STRING" id="7227.FBpp0070517"/>
<dbReference type="PaxDb" id="7227-FBpp0070517"/>
<dbReference type="DNASU" id="31294"/>
<dbReference type="EnsemblMetazoa" id="FBtr0070542">
    <molecule id="P11450-1"/>
    <property type="protein sequence ID" value="FBpp0070517"/>
    <property type="gene ID" value="FBgn0000644"/>
</dbReference>
<dbReference type="GeneID" id="31294"/>
<dbReference type="KEGG" id="dme:Dmel_CG4015"/>
<dbReference type="AGR" id="FB:FBgn0000644"/>
<dbReference type="CTD" id="31294"/>
<dbReference type="FlyBase" id="FBgn0000644">
    <property type="gene designation" value="Fcp3C"/>
</dbReference>
<dbReference type="VEuPathDB" id="VectorBase:FBgn0000644"/>
<dbReference type="eggNOG" id="ENOG502S2MI">
    <property type="taxonomic scope" value="Eukaryota"/>
</dbReference>
<dbReference type="HOGENOM" id="CLU_1016594_0_0_1"/>
<dbReference type="InParanoid" id="P11450"/>
<dbReference type="OMA" id="PYRCPLM"/>
<dbReference type="OrthoDB" id="7412264at2759"/>
<dbReference type="PhylomeDB" id="P11450"/>
<dbReference type="BioGRID-ORCS" id="31294">
    <property type="hits" value="0 hits in 1 CRISPR screen"/>
</dbReference>
<dbReference type="GenomeRNAi" id="31294"/>
<dbReference type="PRO" id="PR:P11450"/>
<dbReference type="Proteomes" id="UP000000803">
    <property type="component" value="Chromosome X"/>
</dbReference>
<dbReference type="Bgee" id="FBgn0000644">
    <property type="expression patterns" value="Expressed in interfollicle cell in ovary and 29 other cell types or tissues"/>
</dbReference>
<dbReference type="ExpressionAtlas" id="P11450">
    <property type="expression patterns" value="baseline and differential"/>
</dbReference>